<protein>
    <recommendedName>
        <fullName>N-acetylgalactosamine-6-sulfatase</fullName>
        <ecNumber>3.1.6.4</ecNumber>
    </recommendedName>
    <alternativeName>
        <fullName>Chondroitinsulfatase</fullName>
        <shortName>Chondroitinase</shortName>
    </alternativeName>
    <alternativeName>
        <fullName>Galactose-6-sulfate sulfatase</fullName>
        <shortName>GalN6S</shortName>
    </alternativeName>
    <alternativeName>
        <fullName>N-acetylgalactosamine-6-sulfate sulfatase</fullName>
        <shortName>GalNAc6S sulfatase</shortName>
    </alternativeName>
</protein>
<sequence>MAAVVAATRWWQLLLVLSAAGMGASGAPQPPNILLLLMDDMGWGDLGVYGEPSRETPNLDRMAAEGLLFPNFYSANPLCSPSRAALLTGRLPIRNGFYTTNAHARNAYTPQEIVGGIPDSEQLLPELLKKAGYVSKIVGKWHLGHRPQFHPLKHGFDEWFGSPNCHFGPYDNKARPNIPVYRDWEMVGRYYEEFPINLKTGEANLTQIYLQEALDFIKRQARHHPFFLYWAVDATHAPVYASKPFLGTSQRGRYGDAVREIDDSIGKILELLQDLHVADNTFVFFTSDNGAALISAPEQGGSNGPFLCGKQTTFEGGMREPALAWWPGHVTAGQVSHQLGSIMDLFTTSLALAGLTPPSDRAIDGLNLLPTLLQGRLMDRPIFYYRGDTLMAATLGQHKAHFWTWTNSWENFRQGIDFCPGQNVSGVTTHNLEDHTKLPLIFHLGRDPGERFPLSFASAEYQEALSRITSVVQQHQEALVPAQPQLNVCNWAVMNWAPPGCEKLGKCLTPPESIPKKCLWSH</sequence>
<name>GALNS_HUMAN</name>
<comment type="catalytic activity">
    <reaction evidence="6">
        <text>Hydrolysis of the 6-sulfate groups of the N-acetyl-D-galactosamine 6-sulfate units of chondroitin sulfate and of the D-galactose 6-sulfate units of keratan sulfate.</text>
        <dbReference type="EC" id="3.1.6.4"/>
    </reaction>
</comment>
<comment type="cofactor">
    <cofactor evidence="6">
        <name>Ca(2+)</name>
        <dbReference type="ChEBI" id="CHEBI:29108"/>
    </cofactor>
    <text evidence="6">Binds 1 Ca(2+) ion per subunit.</text>
</comment>
<comment type="subunit">
    <text evidence="6">Homodimer.</text>
</comment>
<comment type="subcellular location">
    <subcellularLocation>
        <location>Lysosome</location>
    </subcellularLocation>
</comment>
<comment type="PTM">
    <text evidence="6">The conversion to 3-oxoalanine (also known as C-formylglycine, FGly), of a serine or cysteine residue in prokaryotes and of a cysteine residue in eukaryotes, is critical for catalytic activity.</text>
</comment>
<comment type="disease" evidence="2 3 7 8 9 10 11 12 13 14 15 16 18">
    <disease id="DI-00778">
        <name>Mucopolysaccharidosis 4A</name>
        <acronym>MPS4A</acronym>
        <description>A form of mucopolysaccharidosis type 4, an autosomal recessive lysosomal storage disease characterized by intracellular accumulation of keratan sulfate and chondroitin-6-sulfate. Key clinical features include short stature, skeletal dysplasia, dental anomalies, and corneal clouding. Intelligence is normal and there is no direct central nervous system involvement, although the skeletal changes may result in neurologic complications. There is variable severity, but patients with the severe phenotype usually do not survive past the second or third decade of life.</description>
        <dbReference type="MIM" id="253000"/>
    </disease>
    <text>The disease is caused by variants affecting the gene represented in this entry.</text>
</comment>
<comment type="similarity">
    <text evidence="19">Belongs to the sulfatase family.</text>
</comment>
<reference key="1">
    <citation type="journal article" date="1991" name="Biochem. Biophys. Res. Commun.">
        <title>Morquio disease: isolation, characterization and expression of full-length cDNA for human N-acetylgalactosamine-6-sulfate sulfatase.</title>
        <authorList>
            <person name="Tomatsu S."/>
            <person name="Fukuda S."/>
            <person name="Masue M."/>
            <person name="Sukegawa K."/>
            <person name="Fukao T."/>
            <person name="Yamagishi A."/>
            <person name="Hori T."/>
            <person name="Iwata H."/>
            <person name="Ogawa T."/>
            <person name="Nakashima Y."/>
            <person name="Hanyu Y."/>
            <person name="Hashimoto T."/>
            <person name="Titani K."/>
            <person name="Oyama R."/>
            <person name="Suzuki M."/>
            <person name="Yagi K."/>
            <person name="Hayashi Y."/>
            <person name="Orii T."/>
        </authorList>
    </citation>
    <scope>NUCLEOTIDE SEQUENCE [GENOMIC DNA]</scope>
    <scope>PARTIAL PROTEIN SEQUENCE</scope>
    <source>
        <tissue>Placenta</tissue>
    </source>
</reference>
<reference key="2">
    <citation type="journal article" date="1994" name="Genomics">
        <title>Morquio A syndrome: cloning, sequence, and structure of the human N-acetylgalactosamine 6-sulfatase (GALNS) gene.</title>
        <authorList>
            <person name="Morris C.P."/>
            <person name="Guo X.H."/>
            <person name="Apostolou S."/>
            <person name="Hopwood J.J."/>
            <person name="Scott H.S."/>
        </authorList>
    </citation>
    <scope>NUCLEOTIDE SEQUENCE [GENOMIC DNA]</scope>
</reference>
<reference key="3">
    <citation type="journal article" date="2004" name="Genome Res.">
        <title>The status, quality, and expansion of the NIH full-length cDNA project: the Mammalian Gene Collection (MGC).</title>
        <authorList>
            <consortium name="The MGC Project Team"/>
        </authorList>
    </citation>
    <scope>NUCLEOTIDE SEQUENCE [LARGE SCALE MRNA]</scope>
    <source>
        <tissue>Pancreas</tissue>
    </source>
</reference>
<reference key="4">
    <citation type="journal article" date="2009" name="J. Proteome Res.">
        <title>Glycoproteomics analysis of human liver tissue by combination of multiple enzyme digestion and hydrazide chemistry.</title>
        <authorList>
            <person name="Chen R."/>
            <person name="Jiang X."/>
            <person name="Sun D."/>
            <person name="Han G."/>
            <person name="Wang F."/>
            <person name="Ye M."/>
            <person name="Wang L."/>
            <person name="Zou H."/>
        </authorList>
    </citation>
    <scope>GLYCOSYLATION [LARGE SCALE ANALYSIS] AT ASN-423</scope>
    <source>
        <tissue>Liver</tissue>
    </source>
</reference>
<reference key="5">
    <citation type="journal article" date="2015" name="Proteomics">
        <title>N-terminome analysis of the human mitochondrial proteome.</title>
        <authorList>
            <person name="Vaca Jacome A.S."/>
            <person name="Rabilloud T."/>
            <person name="Schaeffer-Reiss C."/>
            <person name="Rompais M."/>
            <person name="Ayoub D."/>
            <person name="Lane L."/>
            <person name="Bairoch A."/>
            <person name="Van Dorsselaer A."/>
            <person name="Carapito C."/>
        </authorList>
    </citation>
    <scope>IDENTIFICATION BY MASS SPECTROMETRY [LARGE SCALE ANALYSIS]</scope>
</reference>
<reference key="6">
    <citation type="journal article" date="2012" name="J. Mol. Biol.">
        <title>The structure of human GALNS reveals the molecular basis for mucopolysaccharidosis IV A.</title>
        <authorList>
            <person name="Rivera-Colon Y."/>
            <person name="Schutsky E.K."/>
            <person name="Kita A.Z."/>
            <person name="Garman S.C."/>
        </authorList>
    </citation>
    <scope>X-RAY CRYSTALLOGRAPHY (2.2 ANGSTROMS) OF 27-522</scope>
    <scope>GLYCOSYLATION AT ASN-204 AND ASN-423</scope>
    <scope>OXOALANINE AT CYS-79</scope>
    <scope>SUBUNIT</scope>
    <scope>COFACTOR</scope>
    <scope>CATALYTIC ACTIVITY</scope>
    <scope>CALCIUM-BINDING SITES</scope>
    <scope>DISULFIDE BONDS</scope>
</reference>
<reference key="7">
    <citation type="journal article" date="1992" name="J. Clin. Invest.">
        <title>Mucopolysaccharidosis type IVA. N-acetylgalactosamine-6-sulfate sulfatase exonic point mutations in classical Morquio and mild cases.</title>
        <authorList>
            <person name="Fukuda S."/>
            <person name="Tomatsu S."/>
            <person name="Masue M."/>
            <person name="Sukegawa K."/>
            <person name="Iwata H."/>
            <person name="Ogawa T."/>
            <person name="Nakashima Y."/>
            <person name="Hori T."/>
            <person name="Yamagishi A."/>
            <person name="Hanyu Y."/>
            <person name="Morooka K."/>
            <person name="Kiman T."/>
            <person name="Hashimoto T."/>
            <person name="Orii T."/>
        </authorList>
    </citation>
    <scope>INVOLVEMENT IN MPS4A</scope>
    <scope>VARIANT MPS4A LYS-204</scope>
</reference>
<reference key="8">
    <citation type="journal article" date="1995" name="Am. J. Hum. Genet.">
        <title>Mucopolysaccharidosis IVA: identification of a common missense mutation I113F in the N-Acetylgalactosamine-6-sulfate sulfatase gene.</title>
        <authorList>
            <person name="Tomatsu S."/>
            <person name="Fukuda S."/>
            <person name="Cooper A."/>
            <person name="Wraith J.E."/>
            <person name="Maruf Rezvi G."/>
            <person name="Yamagishi A."/>
            <person name="Yamada N."/>
            <person name="Kato Z."/>
            <person name="Isogai K."/>
            <person name="Sukegawa K."/>
            <person name="Kondo N."/>
            <person name="Suzuki Y."/>
            <person name="Shimozawa N."/>
            <person name="Orii T."/>
        </authorList>
    </citation>
    <scope>VARIANTS MPS4A ARG-77; TRP-90; VAL-96; PHE-113; LEU-151; GLY-230; THR-291; CYS-386 AND SER-487</scope>
</reference>
<reference key="9">
    <citation type="journal article" date="1995" name="Hum. Mol. Genet.">
        <title>Mucopolysaccharidosis IVA: screening and identification of mutations of the N-acetylgalactosamine-6-sulfate sulfatase gene.</title>
        <authorList>
            <person name="Ogawa T."/>
            <person name="Tomatsu S."/>
            <person name="Fukuda S."/>
            <person name="Yamagishi A."/>
            <person name="Maruf Rezvi G."/>
            <person name="Sukegawa K."/>
            <person name="Kondo N."/>
            <person name="Suzuki Y."/>
            <person name="Shimozawa N."/>
            <person name="Orii T."/>
        </authorList>
    </citation>
    <scope>VARIANTS MPS4A ASN-344; LEU-346 AND VAL-450</scope>
</reference>
<reference key="10">
    <citation type="journal article" date="1995" name="Hum. Mol. Genet.">
        <title>Mucopolysaccharidosis type IVA: identification of six novel mutations among non-Japanese patients.</title>
        <authorList>
            <person name="Tomatsu S."/>
            <person name="Fukuda S."/>
            <person name="Cooper A."/>
            <person name="Wraith J.E."/>
            <person name="Maruf Rezvi G."/>
            <person name="Yamagishi A."/>
            <person name="Yamada N."/>
            <person name="Kato Z."/>
            <person name="Isogai K."/>
            <person name="Sukegawa K."/>
            <person name="Kondo N."/>
            <person name="Suzuki Y."/>
            <person name="Shimozawa N."/>
            <person name="Orii T."/>
        </authorList>
    </citation>
    <scope>VARIANTS MPS4A ARG-77; TRP-90; VAL-96; LEU-151; GLY-230 AND THR-291</scope>
</reference>
<reference key="11">
    <citation type="journal article" date="1995" name="Hum. Mutat.">
        <title>Two new mutations, Q473X and N487S, in a Caucasian patient with mucopolysaccharidosis IVA (Morquio disease).</title>
        <authorList>
            <person name="Tomatsu S."/>
            <person name="Fukuda S."/>
            <person name="Cooper A."/>
            <person name="Wraith J.E."/>
            <person name="Yamada N."/>
            <person name="Isogai K."/>
            <person name="Kato Z."/>
            <person name="Sukegawa K."/>
            <person name="Kondo N."/>
            <person name="Suzuki Y."/>
            <person name="Shimozawa N."/>
            <person name="Orii T."/>
        </authorList>
    </citation>
    <scope>VARIANT MPS4A SER-487</scope>
</reference>
<reference key="12">
    <citation type="journal article" date="1996" name="Am. J. Hum. Genet.">
        <title>Mucopolysaccharidosis IVA: four new exonic mutations in patients with N-acetylgalactosamine-6-sulfate sulfatase deficiency.</title>
        <authorList>
            <person name="Tomatsu S."/>
            <person name="Fukuda S."/>
            <person name="Yamagishi A."/>
            <person name="Cooper A."/>
            <person name="Wraith J.E."/>
            <person name="Hori T."/>
            <person name="Kato Z."/>
            <person name="Yamada N."/>
            <person name="Isogai K."/>
            <person name="Sukegawa K."/>
            <person name="Kondo N."/>
            <person name="Suzuki Y."/>
            <person name="Shimozawa N."/>
            <person name="Orii T."/>
        </authorList>
    </citation>
    <scope>VARIANTS MPS4A ALA-138; SER-151 AND LEU-151</scope>
</reference>
<reference key="13">
    <citation type="journal article" date="1996" name="Am. J. Med. Genet.">
        <title>Heteroallelic missense mutations of the galactosamine-6-sulfate sulfatase (GALNS) gene in a mild form of Morquio disease (MPS IVA).</title>
        <authorList>
            <person name="Cole D.E.C."/>
            <person name="Fukuda S."/>
            <person name="Gordon B.A."/>
            <person name="Rip J.W."/>
            <person name="Lecouteur A.N."/>
            <person name="Rupar C.A."/>
            <person name="Tomatsu S."/>
            <person name="Ogawa T."/>
            <person name="Sukegawa K."/>
            <person name="Orii T."/>
        </authorList>
    </citation>
    <scope>VARIANTS MPS4A CYS-94 AND VAL-97</scope>
</reference>
<reference key="14">
    <citation type="journal article" date="1997" name="Hum. Mutat.">
        <title>Identification of 31 novel mutations in the N-acetylgalactosamine-6-sulfatase gene reveals excessive allelic heterogeneity among patients with Morquio A syndrome.</title>
        <authorList>
            <person name="Bunge S."/>
            <person name="Kleijer W.J."/>
            <person name="Tylki-Szymanska A."/>
            <person name="Steglich C."/>
            <person name="Beck M."/>
            <person name="Tomatsu S."/>
            <person name="Fukuda S."/>
            <person name="Poorthuis B.J.H.M."/>
            <person name="Czartoryska B."/>
            <person name="Orii T."/>
            <person name="Gal A."/>
        </authorList>
    </citation>
    <scope>VARIANTS MPS4A ARG-47; ASN-60; GLY-94; CYS-96; ARG-111; SER-156; ARG-168; HIS-179; ASP-247; GLN-259; ASP-291; PHE-295; GLU-344; GLY-361 AND SER-409</scope>
</reference>
<reference key="15">
    <citation type="journal article" date="1997" name="Hum. Mutat.">
        <title>Fourteen novel mucopolysaccharidosis IVA producing mutations in GALNS gene.</title>
        <authorList>
            <person name="Tomatsu S."/>
            <person name="Fukuda S."/>
            <person name="Cooper A."/>
            <person name="Wraith J.E."/>
            <person name="Ferreira P."/>
            <person name="di Natale P."/>
            <person name="Tortora P."/>
            <person name="Fujimoto A."/>
            <person name="Kato Z."/>
            <person name="Yamada N."/>
            <person name="Isogai K."/>
            <person name="Yamagishi A."/>
            <person name="Sukegawa K."/>
            <person name="Suzuki Y."/>
            <person name="Shimozawa N."/>
            <person name="Kondo N."/>
            <person name="Sly W.S."/>
            <person name="Orii T."/>
        </authorList>
    </citation>
    <scope>VARIANTS MPS4A LEU-80; CYS-94; VAL-97; LEU-125; SER-139; GLN-166; GLY-185; SER-290; ARG-309; VAL-351; CYS-386; VAL-391 AND PRO-395</scope>
</reference>
<reference key="16">
    <citation type="journal article" date="1998" name="Hum. Mutat.">
        <title>Molecular heterogeneity in mucopolysaccharidosis IVA in Australia and Northern Ireland: nine novel mutations including T312S, a common allele that confers a mild phenotype.</title>
        <authorList>
            <person name="Yamada N."/>
            <person name="Fukuda S."/>
            <person name="Tomatsu S."/>
            <person name="Muller V."/>
            <person name="Hopwood J.J."/>
            <person name="Nelson J."/>
            <person name="Kato Z."/>
            <person name="Yamagishi A."/>
            <person name="Sukegawa K."/>
            <person name="Kondo N."/>
            <person name="Orii T."/>
        </authorList>
    </citation>
    <scope>VARIANTS MPS4A VAL-96; PHE-113; ARG-135; CYS-156; LEU-179; THR-257; VAL-284; SER-312; GLN-376 AND VAL-395</scope>
</reference>
<reference key="17">
    <citation type="journal article" date="1998" name="Hum. Mutat. Suppl.">
        <title>Fifteen polymorphisms in the N-acetylgalactosamine-6-sulfate sulfatase (GALNS) gene: diagnostic implications in Morquio disease.</title>
        <authorList>
            <person name="Tomatsu S."/>
            <person name="Fukuda S."/>
            <person name="Cooper A."/>
            <person name="Wraith J.E."/>
            <person name="Yamagishi A."/>
            <person name="Kato Z."/>
            <person name="Yamada N."/>
            <person name="Isogai K."/>
            <person name="Sukegawa K."/>
            <person name="Suzuki Y."/>
            <person name="Shimozawa N."/>
            <person name="Kondo N."/>
            <person name="Orii T."/>
        </authorList>
    </citation>
    <scope>VARIANTS SER-393 AND MET-488</scope>
</reference>
<reference key="18">
    <citation type="journal article" date="2005" name="Hum. Mutat.">
        <title>Mutation and polymorphism spectrum of the GALNS gene in mucopolysaccharidosis IVA (Morquio A).</title>
        <authorList>
            <person name="Tomatsu S."/>
            <person name="Montano A.M."/>
            <person name="Nishioka T."/>
            <person name="Gutierrez M.A."/>
            <person name="Pena O.M."/>
            <person name="Tranda Firescu G.G."/>
            <person name="Lopez P."/>
            <person name="Yamaguchi S."/>
            <person name="Noguchi A."/>
            <person name="Orii T."/>
        </authorList>
    </citation>
    <scope>VARIANTS MPS4A MET-15; 17-LEU-SER-18 DEL; ARG-23; PRO-36; LEU-41; GLU-42; 52-PRO--GLU-55 DEL; PHE-53; TRP-61; VAL-69; 71-ASN--SER-74 DELINS THR; TYR-79; LEU-94; THR-107; SER-116; CYS-141; TYR-150; GLU-155; PHE-162; THR-164; VAL-167; ALA-171; SER-179; VAL-203; ASN-233; PHE-239; TRP-253; ASP-260; PHE-285 DEL; PRO-307; ASN-310; CYS-325; ASP-340; ARG-341; PRO-345; PRO-352; LEU-357; PRO-369; THR-380; SER-380; HIS-386; ASN-388; VAL-392; ASP-398; TYR-401; 403-TRP-THR-404 DEL; ILE-452; PRO-470 AND SER-484</scope>
    <scope>VARIANTS MET-67; VAL-178; MET-200; GLY-231; SER-393; VAL-459 AND MET-488</scope>
</reference>
<reference key="19">
    <citation type="journal article" date="2006" name="Science">
        <title>The consensus coding sequences of human breast and colorectal cancers.</title>
        <authorList>
            <person name="Sjoeblom T."/>
            <person name="Jones S."/>
            <person name="Wood L.D."/>
            <person name="Parsons D.W."/>
            <person name="Lin J."/>
            <person name="Barber T.D."/>
            <person name="Mandelker D."/>
            <person name="Leary R.J."/>
            <person name="Ptak J."/>
            <person name="Silliman N."/>
            <person name="Szabo S."/>
            <person name="Buckhaults P."/>
            <person name="Farrell C."/>
            <person name="Meeh P."/>
            <person name="Markowitz S.D."/>
            <person name="Willis J."/>
            <person name="Dawson D."/>
            <person name="Willson J.K.V."/>
            <person name="Gazdar A.F."/>
            <person name="Hartigan J."/>
            <person name="Wu L."/>
            <person name="Liu C."/>
            <person name="Parmigiani G."/>
            <person name="Park B.H."/>
            <person name="Bachman K.E."/>
            <person name="Papadopoulos N."/>
            <person name="Vogelstein B."/>
            <person name="Kinzler K.W."/>
            <person name="Velculescu V.E."/>
        </authorList>
    </citation>
    <scope>VARIANTS [LARGE SCALE ANALYSIS] TRP-61 AND THR-510</scope>
</reference>
<reference key="20">
    <citation type="journal article" date="2014" name="Mol. Biol. Rep.">
        <title>Computational analysis of human N-acetylgalactosamine-6-sulfate sulfatase enzyme: an update in genotype-phenotype correlation for Morquio A.</title>
        <authorList>
            <person name="Olarte-Avellaneda S."/>
            <person name="Rodriguez-Lopez A."/>
            <person name="Almeciga-Diaz C.J."/>
            <person name="Barrera L.A."/>
        </authorList>
    </citation>
    <scope>VARIANT MPS4A ARG-343</scope>
</reference>
<reference key="21">
    <citation type="journal article" date="2014" name="Mol. Genet. Metab.">
        <title>Molecular testing of 163 patients with Morquio A (Mucopolysaccharidosis IVA) identifies 39 novel GALNS mutations.</title>
        <authorList>
            <person name="Morrone A."/>
            <person name="Tylee K.L."/>
            <person name="Al-Sayed M."/>
            <person name="Brusius-Facchin A.C."/>
            <person name="Caciotti A."/>
            <person name="Church H.J."/>
            <person name="Coll M.J."/>
            <person name="Davidson K."/>
            <person name="Fietz M.J."/>
            <person name="Gort L."/>
            <person name="Hegde M."/>
            <person name="Kubaski F."/>
            <person name="Lacerda L."/>
            <person name="Laranjeira F."/>
            <person name="Leistner-Segal S."/>
            <person name="Mooney S."/>
            <person name="Pajares S."/>
            <person name="Pollard L."/>
            <person name="Ribeiro I."/>
            <person name="Wang R.Y."/>
            <person name="Miller N."/>
        </authorList>
    </citation>
    <scope>VARIANTS MPS4A GLU-16; ARG-36; ASN-40; GLY-48; LYS-51; ARG-77; LEU-80; LEU-81; GLU-84; TRP-90; PRO-91; CYS-94; LEU-94; PHE-113; VAL-116; SER-116; SER-139; ARG-141; TYR-145; LEU-151; ARG-155; LEU-156; ARG-166; SER-179; GLU-201; PRO-214; SER-216; GLY-230; ASN-233; LYS-235; THR-264; LEU-287; THR-291; CYS-301; SER-312; ARG-318; LEU-357; GLY-380; THR-380; CYS-386; HIS-386; VAL-391; VAL-392; HIS-407; VAL-415; THR-416; ARG-420; THR-492; VAL-494; SER-500 AND PHE-507</scope>
    <scope>VARIANTS PHE-74; ASP-121; CYS-159; TYR-165; GLN-251; CYS-254; LYS-260 AND LYS-495</scope>
    <scope>CHARACTERIZATION OF VARIANTS MPS4A GLU-16; ARG-36; LYS-51; LEU-81; GLU-84; PRO-91; VAL-116; TYR-145; LEU-156; ARG-166; GLU-201; PRO-214; SER-216; THR-264; GLY-380; VAL-415; THR-416; ARG-420; THR-492 AND SER-500</scope>
</reference>
<dbReference type="EC" id="3.1.6.4"/>
<dbReference type="EMBL" id="D17629">
    <property type="protein sequence ID" value="BAA04535.1"/>
    <property type="molecule type" value="Genomic_DNA"/>
</dbReference>
<dbReference type="EMBL" id="U06088">
    <property type="protein sequence ID" value="AAC51350.1"/>
    <property type="molecule type" value="Genomic_DNA"/>
</dbReference>
<dbReference type="EMBL" id="U06078">
    <property type="protein sequence ID" value="AAC51350.1"/>
    <property type="status" value="JOINED"/>
    <property type="molecule type" value="Genomic_DNA"/>
</dbReference>
<dbReference type="EMBL" id="U06079">
    <property type="protein sequence ID" value="AAC51350.1"/>
    <property type="status" value="JOINED"/>
    <property type="molecule type" value="Genomic_DNA"/>
</dbReference>
<dbReference type="EMBL" id="U06080">
    <property type="protein sequence ID" value="AAC51350.1"/>
    <property type="status" value="JOINED"/>
    <property type="molecule type" value="Genomic_DNA"/>
</dbReference>
<dbReference type="EMBL" id="U06081">
    <property type="protein sequence ID" value="AAC51350.1"/>
    <property type="status" value="JOINED"/>
    <property type="molecule type" value="Genomic_DNA"/>
</dbReference>
<dbReference type="EMBL" id="U06082">
    <property type="protein sequence ID" value="AAC51350.1"/>
    <property type="status" value="JOINED"/>
    <property type="molecule type" value="Genomic_DNA"/>
</dbReference>
<dbReference type="EMBL" id="U06083">
    <property type="protein sequence ID" value="AAC51350.1"/>
    <property type="status" value="JOINED"/>
    <property type="molecule type" value="Genomic_DNA"/>
</dbReference>
<dbReference type="EMBL" id="U06084">
    <property type="protein sequence ID" value="AAC51350.1"/>
    <property type="status" value="JOINED"/>
    <property type="molecule type" value="Genomic_DNA"/>
</dbReference>
<dbReference type="EMBL" id="U06085">
    <property type="protein sequence ID" value="AAC51350.1"/>
    <property type="status" value="JOINED"/>
    <property type="molecule type" value="Genomic_DNA"/>
</dbReference>
<dbReference type="EMBL" id="U06086">
    <property type="protein sequence ID" value="AAC51350.1"/>
    <property type="status" value="JOINED"/>
    <property type="molecule type" value="Genomic_DNA"/>
</dbReference>
<dbReference type="EMBL" id="U06087">
    <property type="protein sequence ID" value="AAC51350.1"/>
    <property type="status" value="JOINED"/>
    <property type="molecule type" value="Genomic_DNA"/>
</dbReference>
<dbReference type="EMBL" id="BC050684">
    <property type="protein sequence ID" value="AAH50684.2"/>
    <property type="molecule type" value="mRNA"/>
</dbReference>
<dbReference type="EMBL" id="BC056151">
    <property type="protein sequence ID" value="AAH56151.1"/>
    <property type="molecule type" value="mRNA"/>
</dbReference>
<dbReference type="CCDS" id="CCDS10970.1"/>
<dbReference type="PIR" id="JQ1299">
    <property type="entry name" value="KJHUG6"/>
</dbReference>
<dbReference type="RefSeq" id="NP_000503.1">
    <property type="nucleotide sequence ID" value="NM_000512.5"/>
</dbReference>
<dbReference type="PDB" id="4FDI">
    <property type="method" value="X-ray"/>
    <property type="resolution" value="2.20 A"/>
    <property type="chains" value="A/B=27-522"/>
</dbReference>
<dbReference type="PDB" id="4FDJ">
    <property type="method" value="X-ray"/>
    <property type="resolution" value="2.81 A"/>
    <property type="chains" value="A/B=27-522"/>
</dbReference>
<dbReference type="PDBsum" id="4FDI"/>
<dbReference type="PDBsum" id="4FDJ"/>
<dbReference type="SMR" id="P34059"/>
<dbReference type="BioGRID" id="108860">
    <property type="interactions" value="131"/>
</dbReference>
<dbReference type="CORUM" id="P34059"/>
<dbReference type="FunCoup" id="P34059">
    <property type="interactions" value="607"/>
</dbReference>
<dbReference type="IntAct" id="P34059">
    <property type="interactions" value="75"/>
</dbReference>
<dbReference type="STRING" id="9606.ENSP00000268695"/>
<dbReference type="ChEMBL" id="CHEMBL4523218"/>
<dbReference type="DrugBank" id="DB09301">
    <property type="generic name" value="Chondroitin sulfate"/>
</dbReference>
<dbReference type="GlyConnect" id="1531">
    <property type="glycosylation" value="7 N-Linked glycans (2 sites)"/>
</dbReference>
<dbReference type="GlyCosmos" id="P34059">
    <property type="glycosylation" value="2 sites, 7 glycans"/>
</dbReference>
<dbReference type="GlyGen" id="P34059">
    <property type="glycosylation" value="5 sites, 33 N-linked glycans (2 sites)"/>
</dbReference>
<dbReference type="iPTMnet" id="P34059"/>
<dbReference type="PhosphoSitePlus" id="P34059"/>
<dbReference type="SwissPalm" id="P34059"/>
<dbReference type="BioMuta" id="GALNS"/>
<dbReference type="DMDM" id="462148"/>
<dbReference type="jPOST" id="P34059"/>
<dbReference type="MassIVE" id="P34059"/>
<dbReference type="PaxDb" id="9606-ENSP00000268695"/>
<dbReference type="PeptideAtlas" id="P34059"/>
<dbReference type="ProteomicsDB" id="54938"/>
<dbReference type="Pumba" id="P34059"/>
<dbReference type="Antibodypedia" id="30794">
    <property type="antibodies" value="323 antibodies from 35 providers"/>
</dbReference>
<dbReference type="DNASU" id="2588"/>
<dbReference type="Ensembl" id="ENST00000268695.10">
    <property type="protein sequence ID" value="ENSP00000268695.5"/>
    <property type="gene ID" value="ENSG00000141012.13"/>
</dbReference>
<dbReference type="GeneID" id="2588"/>
<dbReference type="KEGG" id="hsa:2588"/>
<dbReference type="MANE-Select" id="ENST00000268695.10">
    <property type="protein sequence ID" value="ENSP00000268695.5"/>
    <property type="RefSeq nucleotide sequence ID" value="NM_000512.5"/>
    <property type="RefSeq protein sequence ID" value="NP_000503.1"/>
</dbReference>
<dbReference type="UCSC" id="uc002fly.4">
    <property type="organism name" value="human"/>
</dbReference>
<dbReference type="AGR" id="HGNC:4122"/>
<dbReference type="CTD" id="2588"/>
<dbReference type="DisGeNET" id="2588"/>
<dbReference type="GeneCards" id="GALNS"/>
<dbReference type="GeneReviews" id="GALNS"/>
<dbReference type="HGNC" id="HGNC:4122">
    <property type="gene designation" value="GALNS"/>
</dbReference>
<dbReference type="HPA" id="ENSG00000141012">
    <property type="expression patterns" value="Low tissue specificity"/>
</dbReference>
<dbReference type="MalaCards" id="GALNS"/>
<dbReference type="MIM" id="253000">
    <property type="type" value="phenotype"/>
</dbReference>
<dbReference type="MIM" id="612222">
    <property type="type" value="gene"/>
</dbReference>
<dbReference type="neXtProt" id="NX_P34059"/>
<dbReference type="OpenTargets" id="ENSG00000141012"/>
<dbReference type="Orphanet" id="309297">
    <property type="disease" value="Mucopolysaccharidosis type 4A"/>
</dbReference>
<dbReference type="PharmGKB" id="PA28535"/>
<dbReference type="VEuPathDB" id="HostDB:ENSG00000141012"/>
<dbReference type="eggNOG" id="KOG3867">
    <property type="taxonomic scope" value="Eukaryota"/>
</dbReference>
<dbReference type="GeneTree" id="ENSGT00940000157787"/>
<dbReference type="HOGENOM" id="CLU_006332_13_5_1"/>
<dbReference type="InParanoid" id="P34059"/>
<dbReference type="OMA" id="VIVQQHK"/>
<dbReference type="OrthoDB" id="103349at2759"/>
<dbReference type="PAN-GO" id="P34059">
    <property type="GO annotations" value="1 GO annotation based on evolutionary models"/>
</dbReference>
<dbReference type="PhylomeDB" id="P34059"/>
<dbReference type="TreeFam" id="TF314186"/>
<dbReference type="BioCyc" id="MetaCyc:HS06790-MONOMER"/>
<dbReference type="BRENDA" id="3.1.6.12">
    <property type="organism ID" value="2681"/>
</dbReference>
<dbReference type="BRENDA" id="3.1.6.4">
    <property type="organism ID" value="2681"/>
</dbReference>
<dbReference type="PathwayCommons" id="P34059"/>
<dbReference type="Reactome" id="R-HSA-2022857">
    <property type="pathway name" value="Keratan sulfate degradation"/>
</dbReference>
<dbReference type="Reactome" id="R-HSA-2206290">
    <property type="pathway name" value="MPS IV - Morquio syndrome A"/>
</dbReference>
<dbReference type="Reactome" id="R-HSA-6798695">
    <property type="pathway name" value="Neutrophil degranulation"/>
</dbReference>
<dbReference type="SignaLink" id="P34059"/>
<dbReference type="SIGNOR" id="P34059"/>
<dbReference type="BioGRID-ORCS" id="2588">
    <property type="hits" value="16 hits in 1158 CRISPR screens"/>
</dbReference>
<dbReference type="ChiTaRS" id="GALNS">
    <property type="organism name" value="human"/>
</dbReference>
<dbReference type="EvolutionaryTrace" id="P34059"/>
<dbReference type="GeneWiki" id="Galactosamine-6_sulfatase"/>
<dbReference type="GenomeRNAi" id="2588"/>
<dbReference type="Pharos" id="P34059">
    <property type="development level" value="Tbio"/>
</dbReference>
<dbReference type="PRO" id="PR:P34059"/>
<dbReference type="Proteomes" id="UP000005640">
    <property type="component" value="Chromosome 16"/>
</dbReference>
<dbReference type="RNAct" id="P34059">
    <property type="molecule type" value="protein"/>
</dbReference>
<dbReference type="Bgee" id="ENSG00000141012">
    <property type="expression patterns" value="Expressed in right uterine tube and 176 other cell types or tissues"/>
</dbReference>
<dbReference type="ExpressionAtlas" id="P34059">
    <property type="expression patterns" value="baseline and differential"/>
</dbReference>
<dbReference type="GO" id="GO:0035578">
    <property type="term" value="C:azurophil granule lumen"/>
    <property type="evidence" value="ECO:0000304"/>
    <property type="project" value="Reactome"/>
</dbReference>
<dbReference type="GO" id="GO:0070062">
    <property type="term" value="C:extracellular exosome"/>
    <property type="evidence" value="ECO:0007005"/>
    <property type="project" value="UniProtKB"/>
</dbReference>
<dbReference type="GO" id="GO:0005576">
    <property type="term" value="C:extracellular region"/>
    <property type="evidence" value="ECO:0000304"/>
    <property type="project" value="Reactome"/>
</dbReference>
<dbReference type="GO" id="GO:0043202">
    <property type="term" value="C:lysosomal lumen"/>
    <property type="evidence" value="ECO:0000304"/>
    <property type="project" value="Reactome"/>
</dbReference>
<dbReference type="GO" id="GO:0004065">
    <property type="term" value="F:arylsulfatase activity"/>
    <property type="evidence" value="ECO:0000318"/>
    <property type="project" value="GO_Central"/>
</dbReference>
<dbReference type="GO" id="GO:0046872">
    <property type="term" value="F:metal ion binding"/>
    <property type="evidence" value="ECO:0007669"/>
    <property type="project" value="UniProtKB-KW"/>
</dbReference>
<dbReference type="GO" id="GO:0003943">
    <property type="term" value="F:N-acetylgalactosamine-4-sulfatase activity"/>
    <property type="evidence" value="ECO:0000304"/>
    <property type="project" value="ProtInc"/>
</dbReference>
<dbReference type="GO" id="GO:0043890">
    <property type="term" value="F:N-acetylgalactosamine-6-sulfatase activity"/>
    <property type="evidence" value="ECO:0000304"/>
    <property type="project" value="Reactome"/>
</dbReference>
<dbReference type="GO" id="GO:0008484">
    <property type="term" value="F:sulfuric ester hydrolase activity"/>
    <property type="evidence" value="ECO:0000314"/>
    <property type="project" value="MGI"/>
</dbReference>
<dbReference type="CDD" id="cd16157">
    <property type="entry name" value="GALNS"/>
    <property type="match status" value="1"/>
</dbReference>
<dbReference type="FunFam" id="3.40.720.10:FF:000021">
    <property type="entry name" value="Galactosamine (N-acetyl)-6-sulfatase"/>
    <property type="match status" value="1"/>
</dbReference>
<dbReference type="Gene3D" id="3.40.720.10">
    <property type="entry name" value="Alkaline Phosphatase, subunit A"/>
    <property type="match status" value="1"/>
</dbReference>
<dbReference type="InterPro" id="IPR017850">
    <property type="entry name" value="Alkaline_phosphatase_core_sf"/>
</dbReference>
<dbReference type="InterPro" id="IPR035626">
    <property type="entry name" value="GALNS"/>
</dbReference>
<dbReference type="InterPro" id="IPR050738">
    <property type="entry name" value="Sulfatase"/>
</dbReference>
<dbReference type="InterPro" id="IPR024607">
    <property type="entry name" value="Sulfatase_CS"/>
</dbReference>
<dbReference type="InterPro" id="IPR000917">
    <property type="entry name" value="Sulfatase_N"/>
</dbReference>
<dbReference type="PANTHER" id="PTHR42693">
    <property type="entry name" value="ARYLSULFATASE FAMILY MEMBER"/>
    <property type="match status" value="1"/>
</dbReference>
<dbReference type="PANTHER" id="PTHR42693:SF47">
    <property type="entry name" value="N-ACETYLGALACTOSAMINE-6-SULFATASE"/>
    <property type="match status" value="1"/>
</dbReference>
<dbReference type="Pfam" id="PF00884">
    <property type="entry name" value="Sulfatase"/>
    <property type="match status" value="1"/>
</dbReference>
<dbReference type="Pfam" id="PF14707">
    <property type="entry name" value="Sulfatase_C"/>
    <property type="match status" value="1"/>
</dbReference>
<dbReference type="SUPFAM" id="SSF53649">
    <property type="entry name" value="Alkaline phosphatase-like"/>
    <property type="match status" value="1"/>
</dbReference>
<dbReference type="PROSITE" id="PS00523">
    <property type="entry name" value="SULFATASE_1"/>
    <property type="match status" value="1"/>
</dbReference>
<dbReference type="PROSITE" id="PS00149">
    <property type="entry name" value="SULFATASE_2"/>
    <property type="match status" value="1"/>
</dbReference>
<organism>
    <name type="scientific">Homo sapiens</name>
    <name type="common">Human</name>
    <dbReference type="NCBI Taxonomy" id="9606"/>
    <lineage>
        <taxon>Eukaryota</taxon>
        <taxon>Metazoa</taxon>
        <taxon>Chordata</taxon>
        <taxon>Craniata</taxon>
        <taxon>Vertebrata</taxon>
        <taxon>Euteleostomi</taxon>
        <taxon>Mammalia</taxon>
        <taxon>Eutheria</taxon>
        <taxon>Euarchontoglires</taxon>
        <taxon>Primates</taxon>
        <taxon>Haplorrhini</taxon>
        <taxon>Catarrhini</taxon>
        <taxon>Hominidae</taxon>
        <taxon>Homo</taxon>
    </lineage>
</organism>
<keyword id="KW-0002">3D-structure</keyword>
<keyword id="KW-0106">Calcium</keyword>
<keyword id="KW-0903">Direct protein sequencing</keyword>
<keyword id="KW-0225">Disease variant</keyword>
<keyword id="KW-1015">Disulfide bond</keyword>
<keyword id="KW-0242">Dwarfism</keyword>
<keyword id="KW-0325">Glycoprotein</keyword>
<keyword id="KW-0378">Hydrolase</keyword>
<keyword id="KW-0458">Lysosome</keyword>
<keyword id="KW-0479">Metal-binding</keyword>
<keyword id="KW-0510">Mucopolysaccharidosis</keyword>
<keyword id="KW-1267">Proteomics identification</keyword>
<keyword id="KW-1185">Reference proteome</keyword>
<keyword id="KW-0732">Signal</keyword>
<proteinExistence type="evidence at protein level"/>
<feature type="signal peptide">
    <location>
        <begin position="1"/>
        <end position="26"/>
    </location>
</feature>
<feature type="chain" id="PRO_0000033411" description="N-acetylgalactosamine-6-sulfatase">
    <location>
        <begin position="27"/>
        <end position="522"/>
    </location>
</feature>
<feature type="region of interest" description="Catalytic domain">
    <location>
        <begin position="27"/>
        <end position="379"/>
    </location>
</feature>
<feature type="active site" description="Nucleophile" evidence="6">
    <location>
        <position position="79"/>
    </location>
</feature>
<feature type="active site" evidence="1">
    <location>
        <position position="142"/>
    </location>
</feature>
<feature type="binding site" evidence="6">
    <location>
        <position position="39"/>
    </location>
    <ligand>
        <name>Ca(2+)</name>
        <dbReference type="ChEBI" id="CHEBI:29108"/>
    </ligand>
</feature>
<feature type="binding site" evidence="6">
    <location>
        <position position="40"/>
    </location>
    <ligand>
        <name>Ca(2+)</name>
        <dbReference type="ChEBI" id="CHEBI:29108"/>
    </ligand>
</feature>
<feature type="binding site" description="via 3-oxoalanine" evidence="6">
    <location>
        <position position="79"/>
    </location>
    <ligand>
        <name>Ca(2+)</name>
        <dbReference type="ChEBI" id="CHEBI:29108"/>
    </ligand>
</feature>
<feature type="binding site" evidence="6">
    <location>
        <position position="288"/>
    </location>
    <ligand>
        <name>Ca(2+)</name>
        <dbReference type="ChEBI" id="CHEBI:29108"/>
    </ligand>
</feature>
<feature type="binding site" evidence="6">
    <location>
        <position position="289"/>
    </location>
    <ligand>
        <name>Ca(2+)</name>
        <dbReference type="ChEBI" id="CHEBI:29108"/>
    </ligand>
</feature>
<feature type="modified residue" description="3-oxoalanine (Cys)" evidence="6">
    <location>
        <position position="79"/>
    </location>
</feature>
<feature type="glycosylation site" description="N-linked (GlcNAc...) asparagine" evidence="6">
    <location>
        <position position="204"/>
    </location>
</feature>
<feature type="glycosylation site" description="N-linked (GlcNAc...) asparagine" evidence="5 6">
    <location>
        <position position="423"/>
    </location>
</feature>
<feature type="disulfide bond" evidence="6">
    <location>
        <begin position="308"/>
        <end position="419"/>
    </location>
</feature>
<feature type="disulfide bond" evidence="6">
    <location>
        <begin position="489"/>
        <end position="518"/>
    </location>
</feature>
<feature type="disulfide bond" evidence="6">
    <location>
        <begin position="501"/>
        <end position="507"/>
    </location>
</feature>
<feature type="sequence variant" id="VAR_024873" description="In MPS4A; dbSNP:rs866745731." evidence="3">
    <original>L</original>
    <variation>M</variation>
    <location>
        <position position="15"/>
    </location>
</feature>
<feature type="sequence variant" id="VAR_071569" description="In MPS4A; reduced enzymatic activity; dbSNP:rs794729202." evidence="7">
    <original>V</original>
    <variation>E</variation>
    <location>
        <position position="16"/>
    </location>
</feature>
<feature type="sequence variant" id="VAR_024874" description="In MPS4A." evidence="3">
    <location>
        <begin position="17"/>
        <end position="18"/>
    </location>
</feature>
<feature type="sequence variant" id="VAR_024875" description="In MPS4A; dbSNP:rs2143013593." evidence="3">
    <original>G</original>
    <variation>R</variation>
    <location>
        <position position="23"/>
    </location>
</feature>
<feature type="sequence variant" id="VAR_024876" description="In MPS4A; dbSNP:rs755832705." evidence="3">
    <original>L</original>
    <variation>P</variation>
    <location>
        <position position="36"/>
    </location>
</feature>
<feature type="sequence variant" id="VAR_071570" description="In MPS4A; reduced enzymatic activity; dbSNP:rs755832705." evidence="7">
    <original>L</original>
    <variation>R</variation>
    <location>
        <position position="36"/>
    </location>
</feature>
<feature type="sequence variant" id="VAR_071571" description="In MPS4A; dbSNP:rs1967935603." evidence="7">
    <original>D</original>
    <variation>N</variation>
    <location>
        <position position="40"/>
    </location>
</feature>
<feature type="sequence variant" id="VAR_024877" description="In MPS4A; dbSNP:rs1283377907." evidence="3">
    <original>M</original>
    <variation>L</variation>
    <location>
        <position position="41"/>
    </location>
</feature>
<feature type="sequence variant" id="VAR_024878" description="In MPS4A; dbSNP:rs2143005560." evidence="3">
    <original>G</original>
    <variation>E</variation>
    <location>
        <position position="42"/>
    </location>
</feature>
<feature type="sequence variant" id="VAR_007172" description="In MPS4A; severe form; dbSNP:rs199638097." evidence="15">
    <original>G</original>
    <variation>R</variation>
    <location>
        <position position="47"/>
    </location>
</feature>
<feature type="sequence variant" id="VAR_071572" description="In MPS4A; dbSNP:rs191519947." evidence="7">
    <original>V</original>
    <variation>G</variation>
    <location>
        <position position="48"/>
    </location>
</feature>
<feature type="sequence variant" id="VAR_071573" description="In MPS4A; reduced enzymatic activity; dbSNP:rs1296755011." evidence="7">
    <original>E</original>
    <variation>K</variation>
    <location>
        <position position="51"/>
    </location>
</feature>
<feature type="sequence variant" id="VAR_024879" description="In MPS4A." evidence="3">
    <location>
        <begin position="52"/>
        <end position="55"/>
    </location>
</feature>
<feature type="sequence variant" id="VAR_024880" description="In MPS4A; dbSNP:rs1421990673." evidence="3">
    <original>S</original>
    <variation>F</variation>
    <location>
        <position position="53"/>
    </location>
</feature>
<feature type="sequence variant" id="VAR_007173" description="In MPS4A; mild form; dbSNP:rs118204447." evidence="15">
    <original>D</original>
    <variation>N</variation>
    <location>
        <position position="60"/>
    </location>
</feature>
<feature type="sequence variant" id="VAR_024881" description="In MPS4A; dbSNP:rs145798311." evidence="3 4">
    <original>R</original>
    <variation>W</variation>
    <location>
        <position position="61"/>
    </location>
</feature>
<feature type="sequence variant" id="VAR_007174" description="Associated with S-409 in a MPS4A patient; dbSNP:rs11862754." evidence="3">
    <original>L</original>
    <variation>M</variation>
    <location>
        <position position="67"/>
    </location>
</feature>
<feature type="sequence variant" id="VAR_024882" description="In MPS4A; dbSNP:rs118204445." evidence="3">
    <original>F</original>
    <variation>V</variation>
    <location>
        <position position="69"/>
    </location>
</feature>
<feature type="sequence variant" id="VAR_024883" description="In MPS4A." evidence="3">
    <original>NFYS</original>
    <variation>T</variation>
    <location>
        <begin position="71"/>
        <end position="74"/>
    </location>
</feature>
<feature type="sequence variant" id="VAR_071574" description="In dbSNP:rs2143005475." evidence="7">
    <original>S</original>
    <variation>F</variation>
    <location>
        <position position="74"/>
    </location>
</feature>
<feature type="sequence variant" id="VAR_007175" description="In MPS4A; severe form; dbSNP:rs1422505598." evidence="7 10 11">
    <original>P</original>
    <variation>R</variation>
    <location>
        <position position="77"/>
    </location>
</feature>
<feature type="sequence variant" id="VAR_024884" description="In MPS4A; dbSNP:rs1263679818." evidence="3">
    <original>C</original>
    <variation>Y</variation>
    <location>
        <position position="79"/>
    </location>
</feature>
<feature type="sequence variant" id="VAR_007177" description="In MPS4A; intermediate form; dbSNP:rs1209154325." evidence="7 16">
    <original>S</original>
    <variation>L</variation>
    <location>
        <position position="80"/>
    </location>
</feature>
<feature type="sequence variant" id="VAR_071575" description="In MPS4A; reduced enzymatic activity; dbSNP:rs2143005457." evidence="7">
    <original>P</original>
    <variation>L</variation>
    <location>
        <position position="81"/>
    </location>
</feature>
<feature type="sequence variant" id="VAR_071576" description="In MPS4A; loss of enzymatic activity; dbSNP:rs141340188." evidence="7">
    <original>A</original>
    <variation>E</variation>
    <location>
        <position position="84"/>
    </location>
</feature>
<feature type="sequence variant" id="VAR_007178" description="In MPS4A; severe form; dbSNP:rs1028668536." evidence="7 10 11">
    <original>R</original>
    <variation>W</variation>
    <location>
        <position position="90"/>
    </location>
</feature>
<feature type="sequence variant" id="VAR_071577" description="In MPS4A; loss of enzymatic activity; dbSNP:rs2143005099." evidence="7">
    <original>L</original>
    <variation>P</variation>
    <location>
        <position position="91"/>
    </location>
</feature>
<feature type="sequence variant" id="VAR_007179" description="In MPS4A; mild/intermediate form; dbSNP:rs118204441." evidence="7 14 16">
    <original>R</original>
    <variation>C</variation>
    <location>
        <position position="94"/>
    </location>
</feature>
<feature type="sequence variant" id="VAR_007180" description="In MPS4A; mild/intermediate form; dbSNP:rs118204441." evidence="15">
    <original>R</original>
    <variation>G</variation>
    <location>
        <position position="94"/>
    </location>
</feature>
<feature type="sequence variant" id="VAR_024885" description="In MPS4A; dbSNP:rs727503946." evidence="3 7">
    <original>R</original>
    <variation>L</variation>
    <location>
        <position position="94"/>
    </location>
</feature>
<feature type="sequence variant" id="VAR_007181" description="In MPS4A; dbSNP:rs2143005086." evidence="15">
    <original>G</original>
    <variation>C</variation>
    <location>
        <position position="96"/>
    </location>
</feature>
<feature type="sequence variant" id="VAR_007182" description="In MPS4A; severe form; dbSNP:rs1966992597." evidence="10 11 18">
    <original>G</original>
    <variation>V</variation>
    <location>
        <position position="96"/>
    </location>
</feature>
<feature type="sequence variant" id="VAR_007183" description="In MPS4A; mild form; dbSNP:rs2143005083." evidence="14 16">
    <original>F</original>
    <variation>V</variation>
    <location>
        <position position="97"/>
    </location>
</feature>
<feature type="sequence variant" id="VAR_024886" description="In MPS4A; dbSNP:rs763184657." evidence="3">
    <original>A</original>
    <variation>T</variation>
    <location>
        <position position="107"/>
    </location>
</feature>
<feature type="sequence variant" id="VAR_007184" description="In MPS4A; intermediate form; dbSNP:rs2143004671." evidence="15">
    <original>Q</original>
    <variation>R</variation>
    <location>
        <position position="111"/>
    </location>
</feature>
<feature type="sequence variant" id="VAR_007185" description="In MPS4A; severe form; common mutation; found in patients with Irish-British ancestry; dbSNP:rs118204438." evidence="7 11 18">
    <original>I</original>
    <variation>F</variation>
    <location>
        <position position="113"/>
    </location>
</feature>
<feature type="sequence variant" id="VAR_024887" description="In MPS4A; dbSNP:rs1444754604." evidence="3 7">
    <original>G</original>
    <variation>S</variation>
    <location>
        <position position="116"/>
    </location>
</feature>
<feature type="sequence variant" id="VAR_071578" description="In MPS4A; reduced enzymatic activity; dbSNP:rs1966945369." evidence="7">
    <original>G</original>
    <variation>V</variation>
    <location>
        <position position="116"/>
    </location>
</feature>
<feature type="sequence variant" id="VAR_071579" description="In dbSNP:rs780986116." evidence="7">
    <original>E</original>
    <variation>D</variation>
    <location>
        <position position="121"/>
    </location>
</feature>
<feature type="sequence variant" id="VAR_007186" description="In MPS4A; severe form; dbSNP:rs746949976." evidence="16">
    <original>P</original>
    <variation>L</variation>
    <location>
        <position position="125"/>
    </location>
</feature>
<feature type="sequence variant" id="VAR_007187" description="In MPS4A; severe form; dbSNP:rs2143004605." evidence="18">
    <original>S</original>
    <variation>R</variation>
    <location>
        <position position="135"/>
    </location>
</feature>
<feature type="sequence variant" id="VAR_007188" description="In MPS4A; mild/severe/intermediate form; dbSNP:rs118204436." evidence="13">
    <original>V</original>
    <variation>A</variation>
    <location>
        <position position="138"/>
    </location>
</feature>
<feature type="sequence variant" id="VAR_007189" description="In MPS4A; severe form; dbSNP:rs146093755." evidence="7 16">
    <original>G</original>
    <variation>S</variation>
    <location>
        <position position="139"/>
    </location>
</feature>
<feature type="sequence variant" id="VAR_024888" description="In MPS4A; dbSNP:rs2143002473." evidence="3">
    <original>W</original>
    <variation>C</variation>
    <location>
        <position position="141"/>
    </location>
</feature>
<feature type="sequence variant" id="VAR_007190" description="In MPS4A; severe form; dbSNP:rs794727625." evidence="7">
    <original>W</original>
    <variation>R</variation>
    <location>
        <position position="141"/>
    </location>
</feature>
<feature type="sequence variant" id="VAR_071580" description="In MPS4A; reduced enzymatic activity; dbSNP:rs577334837." evidence="7">
    <original>H</original>
    <variation>Y</variation>
    <location>
        <position position="145"/>
    </location>
</feature>
<feature type="sequence variant" id="VAR_024889" description="In MPS4A; dbSNP:rs1168278189." evidence="3">
    <original>H</original>
    <variation>Y</variation>
    <location>
        <position position="150"/>
    </location>
</feature>
<feature type="sequence variant" id="VAR_007191" description="In MPS4A; severe form; dbSNP:rs559063128." evidence="7 10 11 13">
    <original>P</original>
    <variation>L</variation>
    <location>
        <position position="151"/>
    </location>
</feature>
<feature type="sequence variant" id="VAR_007192" description="In MPS4A; severe form; dbSNP:rs781439830." evidence="13">
    <original>P</original>
    <variation>S</variation>
    <location>
        <position position="151"/>
    </location>
</feature>
<feature type="sequence variant" id="VAR_024890" description="In MPS4A; dbSNP:rs2143002437." evidence="3">
    <original>G</original>
    <variation>E</variation>
    <location>
        <position position="155"/>
    </location>
</feature>
<feature type="sequence variant" id="VAR_007193" description="In MPS4A; severe form; dbSNP:rs398123438." evidence="7">
    <original>G</original>
    <variation>R</variation>
    <location>
        <position position="155"/>
    </location>
</feature>
<feature type="sequence variant" id="VAR_007194" description="In MPS4A; severe form; dbSNP:rs1301146300." evidence="18">
    <original>F</original>
    <variation>C</variation>
    <location>
        <position position="156"/>
    </location>
</feature>
<feature type="sequence variant" id="VAR_071581" description="In MPS4A; reduced enzymatic activity; dbSNP:rs1308500116." evidence="7">
    <original>F</original>
    <variation>L</variation>
    <location>
        <position position="156"/>
    </location>
</feature>
<feature type="sequence variant" id="VAR_007195" description="In MPS4A; mild form; dbSNP:rs1301146300." evidence="15">
    <original>F</original>
    <variation>S</variation>
    <location>
        <position position="156"/>
    </location>
</feature>
<feature type="sequence variant" id="VAR_071582" description="In dbSNP:rs398123439." evidence="7">
    <original>W</original>
    <variation>C</variation>
    <location>
        <position position="159"/>
    </location>
</feature>
<feature type="sequence variant" id="VAR_024891" description="In MPS4A; dbSNP:rs118204444." evidence="3">
    <original>S</original>
    <variation>F</variation>
    <location>
        <position position="162"/>
    </location>
</feature>
<feature type="sequence variant" id="VAR_024892" description="In MPS4A; dbSNP:rs761725425." evidence="3">
    <original>N</original>
    <variation>T</variation>
    <location>
        <position position="164"/>
    </location>
</feature>
<feature type="sequence variant" id="VAR_071583" description="In dbSNP:rs768757999." evidence="7">
    <original>C</original>
    <variation>Y</variation>
    <location>
        <position position="165"/>
    </location>
</feature>
<feature type="sequence variant" id="VAR_007196" description="In MPS4A; severe form; dbSNP:rs1301198698." evidence="16">
    <original>H</original>
    <variation>Q</variation>
    <location>
        <position position="166"/>
    </location>
</feature>
<feature type="sequence variant" id="VAR_071584" description="In MPS4A; reduced enzymatic activity; dbSNP:rs2143002394." evidence="7">
    <original>H</original>
    <variation>R</variation>
    <location>
        <position position="166"/>
    </location>
</feature>
<feature type="sequence variant" id="VAR_024893" description="In MPS4A; dbSNP:rs148565559." evidence="3">
    <original>F</original>
    <variation>V</variation>
    <location>
        <position position="167"/>
    </location>
</feature>
<feature type="sequence variant" id="VAR_007197" description="In MPS4A; dbSNP:rs775732598." evidence="15">
    <original>G</original>
    <variation>R</variation>
    <location>
        <position position="168"/>
    </location>
</feature>
<feature type="sequence variant" id="VAR_024894" description="In MPS4A; dbSNP:rs2143002367." evidence="3">
    <original>D</original>
    <variation>A</variation>
    <location>
        <position position="171"/>
    </location>
</feature>
<feature type="sequence variant" id="VAR_007198" evidence="3">
    <original>I</original>
    <variation>V</variation>
    <location>
        <position position="178"/>
    </location>
</feature>
<feature type="sequence variant" id="VAR_007199" description="In MPS4A; severe form; dbSNP:rs1912278519." evidence="15">
    <original>P</original>
    <variation>H</variation>
    <location>
        <position position="179"/>
    </location>
</feature>
<feature type="sequence variant" id="VAR_007200" description="In MPS4A; severe form; dbSNP:rs1912278519." evidence="18">
    <original>P</original>
    <variation>L</variation>
    <location>
        <position position="179"/>
    </location>
</feature>
<feature type="sequence variant" id="VAR_024895" description="In MPS4A; dbSNP:rs2143002341." evidence="3 7">
    <original>P</original>
    <variation>S</variation>
    <location>
        <position position="179"/>
    </location>
</feature>
<feature type="sequence variant" id="VAR_007201" description="In MPS4A; severe form; dbSNP:rs2143002324." evidence="16">
    <original>E</original>
    <variation>G</variation>
    <location>
        <position position="185"/>
    </location>
</feature>
<feature type="sequence variant" id="VAR_007202" description="In dbSNP:rs7187889." evidence="3">
    <original>T</original>
    <variation>M</variation>
    <location>
        <position position="200"/>
    </location>
</feature>
<feature type="sequence variant" id="VAR_071585" description="In MPS4A; reduced enzymatic activity; dbSNP:rs772413313." evidence="7">
    <original>G</original>
    <variation>E</variation>
    <location>
        <position position="201"/>
    </location>
</feature>
<feature type="sequence variant" id="VAR_024896" description="In MPS4A; dbSNP:rs2143001722." evidence="3">
    <original>A</original>
    <variation>V</variation>
    <location>
        <position position="203"/>
    </location>
</feature>
<feature type="sequence variant" id="VAR_007203" description="In MPS4A; mild form; dbSNP:rs118204435." evidence="2">
    <original>N</original>
    <variation>K</variation>
    <location>
        <position position="204"/>
    </location>
</feature>
<feature type="sequence variant" id="VAR_071586" description="In MPS4A; reduced enzymatic activity; dbSNP:rs771810111." evidence="7">
    <original>L</original>
    <variation>P</variation>
    <location>
        <position position="214"/>
    </location>
</feature>
<feature type="sequence variant" id="VAR_071587" description="In MPS4A; reduced enzymatic activity; dbSNP:rs747805226." evidence="7">
    <original>F</original>
    <variation>S</variation>
    <location>
        <position position="216"/>
    </location>
</feature>
<feature type="sequence variant" id="VAR_007204" description="In MPS4A; severe form; dbSNP:rs2143001411." evidence="7 10 11">
    <original>W</original>
    <variation>G</variation>
    <location>
        <position position="230"/>
    </location>
</feature>
<feature type="sequence variant" id="VAR_007205" description="In dbSNP:rs34745339." evidence="3">
    <original>A</original>
    <variation>G</variation>
    <location>
        <position position="231"/>
    </location>
</feature>
<feature type="sequence variant" id="VAR_024897" description="In MPS4A; dbSNP:rs753051547." evidence="3 7">
    <original>D</original>
    <variation>N</variation>
    <location>
        <position position="233"/>
    </location>
</feature>
<feature type="sequence variant" id="VAR_071588" description="In MPS4A; dbSNP:rs398123440." evidence="7">
    <original>T</original>
    <variation>K</variation>
    <location>
        <position position="235"/>
    </location>
</feature>
<feature type="sequence variant" id="VAR_024898" description="In MPS4A; dbSNP:rs145131011." evidence="3">
    <original>V</original>
    <variation>F</variation>
    <location>
        <position position="239"/>
    </location>
</feature>
<feature type="sequence variant" id="VAR_007206" description="In MPS4A; dbSNP:rs761385192." evidence="15">
    <original>G</original>
    <variation>D</variation>
    <location>
        <position position="247"/>
    </location>
</feature>
<feature type="sequence variant" id="VAR_071589" description="In dbSNP:rs1199639828." evidence="7">
    <original>R</original>
    <variation>Q</variation>
    <location>
        <position position="251"/>
    </location>
</feature>
<feature type="sequence variant" id="VAR_024899" description="In MPS4A; dbSNP:rs775300515." evidence="3">
    <original>R</original>
    <variation>W</variation>
    <location>
        <position position="253"/>
    </location>
</feature>
<feature type="sequence variant" id="VAR_071590" description="In dbSNP:rs2143001210." evidence="7">
    <original>Y</original>
    <variation>C</variation>
    <location>
        <position position="254"/>
    </location>
</feature>
<feature type="sequence variant" id="VAR_007207" description="In MPS4A; severe form; dbSNP:rs773283163." evidence="18">
    <original>A</original>
    <variation>T</variation>
    <location>
        <position position="257"/>
    </location>
</feature>
<feature type="sequence variant" id="VAR_007208" description="In MPS4A; mild form; dbSNP:rs118204442." evidence="15">
    <original>R</original>
    <variation>Q</variation>
    <location>
        <position position="259"/>
    </location>
</feature>
<feature type="sequence variant" id="VAR_024900" description="In MPS4A; dbSNP:rs2143001191." evidence="3">
    <original>E</original>
    <variation>D</variation>
    <location>
        <position position="260"/>
    </location>
</feature>
<feature type="sequence variant" id="VAR_071591" description="In dbSNP:rs2143001194." evidence="7">
    <original>E</original>
    <variation>K</variation>
    <location>
        <position position="260"/>
    </location>
</feature>
<feature type="sequence variant" id="VAR_071592" description="In MPS4A; reduced enzymatic activity; dbSNP:rs2143001182." evidence="7">
    <original>S</original>
    <variation>T</variation>
    <location>
        <position position="264"/>
    </location>
</feature>
<feature type="sequence variant" id="VAR_007209" description="In MPS4A; mild form.">
    <location>
        <begin position="279"/>
        <end position="287"/>
    </location>
</feature>
<feature type="sequence variant" id="VAR_007210" description="In MPS4A; severe form; dbSNP:rs144067930." evidence="18">
    <original>F</original>
    <variation>V</variation>
    <location>
        <position position="284"/>
    </location>
</feature>
<feature type="sequence variant" id="VAR_024901" description="In MPS4A; dbSNP:rs768664270." evidence="3">
    <location>
        <position position="285"/>
    </location>
</feature>
<feature type="sequence variant" id="VAR_007211" description="In MPS4A; severe form; dbSNP:rs770053354." evidence="7">
    <original>S</original>
    <variation>L</variation>
    <location>
        <position position="287"/>
    </location>
</feature>
<feature type="sequence variant" id="VAR_007212" description="In MPS4A; severe form; dbSNP:rs975409254." evidence="16">
    <original>G</original>
    <variation>S</variation>
    <location>
        <position position="290"/>
    </location>
</feature>
<feature type="sequence variant" id="VAR_007213" description="In MPS4A; mild form; dbSNP:rs2143001123." evidence="15">
    <original>A</original>
    <variation>D</variation>
    <location>
        <position position="291"/>
    </location>
</feature>
<feature type="sequence variant" id="VAR_007214" description="In MPS4A; severe form; dbSNP:rs118204448." evidence="7 10 11">
    <original>A</original>
    <variation>T</variation>
    <location>
        <position position="291"/>
    </location>
</feature>
<feature type="sequence variant" id="VAR_007215" description="In MPS4A; mild form; dbSNP:rs149239881." evidence="15">
    <original>S</original>
    <variation>F</variation>
    <location>
        <position position="295"/>
    </location>
</feature>
<feature type="sequence variant" id="VAR_007216" description="In MPS4A; severe form; dbSNP:rs118204443." evidence="7">
    <original>G</original>
    <variation>C</variation>
    <location>
        <position position="301"/>
    </location>
</feature>
<feature type="sequence variant" id="VAR_024902" description="In MPS4A; dbSNP:rs2142999202." evidence="3">
    <original>L</original>
    <variation>P</variation>
    <location>
        <position position="307"/>
    </location>
</feature>
<feature type="sequence variant" id="VAR_007217" description="In MPS4A; severe form; dbSNP:rs2142999191." evidence="16">
    <original>G</original>
    <variation>R</variation>
    <location>
        <position position="309"/>
    </location>
</feature>
<feature type="sequence variant" id="VAR_024903" description="In MPS4A; dbSNP:rs377285422." evidence="3">
    <original>K</original>
    <variation>N</variation>
    <location>
        <position position="310"/>
    </location>
</feature>
<feature type="sequence variant" id="VAR_007218" description="In MPS4A; mild/intermediate/severe form; dbSNP:rs118204446." evidence="7 18">
    <original>T</original>
    <variation>S</variation>
    <location>
        <position position="312"/>
    </location>
</feature>
<feature type="sequence variant" id="VAR_007219" description="In MPS4A; severe form; dbSNP:rs746756997." evidence="7">
    <original>M</original>
    <variation>R</variation>
    <location>
        <position position="318"/>
    </location>
</feature>
<feature type="sequence variant" id="VAR_024904" description="In MPS4A; dbSNP:rs1269110043." evidence="3">
    <original>W</original>
    <variation>C</variation>
    <location>
        <position position="325"/>
    </location>
</feature>
<feature type="sequence variant" id="VAR_007220" description="In MPS4A; dbSNP:rs2142999135.">
    <location>
        <position position="325"/>
    </location>
</feature>
<feature type="sequence variant" id="VAR_024905" description="In MPS4A; dbSNP:rs267606838." evidence="3">
    <original>G</original>
    <variation>D</variation>
    <location>
        <position position="340"/>
    </location>
</feature>
<feature type="sequence variant" id="VAR_024906" description="In MPS4A; dbSNP:rs2142995871." evidence="3">
    <original>S</original>
    <variation>R</variation>
    <location>
        <position position="341"/>
    </location>
</feature>
<feature type="sequence variant" id="VAR_007221" description="In MPS4A; severe form.">
    <original>M</original>
    <variation>R</variation>
    <location>
        <position position="343"/>
    </location>
</feature>
<feature type="sequence variant" id="VAR_007222" description="In MPS4A; dbSNP:rs1407467035." evidence="15">
    <original>D</original>
    <variation>E</variation>
    <location>
        <position position="344"/>
    </location>
</feature>
<feature type="sequence variant" id="VAR_007223" description="In MPS4A; severe form; dbSNP:rs2142995864." evidence="12">
    <original>D</original>
    <variation>N</variation>
    <location>
        <position position="344"/>
    </location>
</feature>
<feature type="sequence variant" id="VAR_024907" description="In MPS4A; dbSNP:rs2142995853." evidence="3">
    <original>L</original>
    <variation>P</variation>
    <location>
        <position position="345"/>
    </location>
</feature>
<feature type="sequence variant" id="VAR_007224" description="In MPS4A; severe form; dbSNP:rs766504053." evidence="12">
    <original>F</original>
    <variation>L</variation>
    <location>
        <position position="346"/>
    </location>
</feature>
<feature type="sequence variant" id="VAR_007225" description="In MPS4A; severe form; dbSNP:rs761386453." evidence="16">
    <original>A</original>
    <variation>V</variation>
    <location>
        <position position="351"/>
    </location>
</feature>
<feature type="sequence variant" id="VAR_024908" description="In MPS4A; dbSNP:rs2142995830." evidence="3">
    <original>L</original>
    <variation>P</variation>
    <location>
        <position position="352"/>
    </location>
</feature>
<feature type="sequence variant" id="VAR_024909" description="In MPS4A; dbSNP:rs769748679." evidence="3 7">
    <original>P</original>
    <variation>L</variation>
    <location>
        <position position="357"/>
    </location>
</feature>
<feature type="sequence variant" id="VAR_007226" description="In MPS4A; dbSNP:rs778120439." evidence="15">
    <original>R</original>
    <variation>G</variation>
    <location>
        <position position="361"/>
    </location>
</feature>
<feature type="sequence variant" id="VAR_024910" description="In MPS4A; dbSNP:rs2142995771." evidence="3">
    <original>L</original>
    <variation>P</variation>
    <location>
        <position position="369"/>
    </location>
</feature>
<feature type="sequence variant" id="VAR_007227" description="In MPS4A; severe form; dbSNP:rs150734270." evidence="18">
    <original>R</original>
    <variation>Q</variation>
    <location>
        <position position="376"/>
    </location>
</feature>
<feature type="sequence variant" id="VAR_071593" description="In MPS4A; loss of enzymatic activity; dbSNP:rs770908172." evidence="7">
    <original>R</original>
    <variation>G</variation>
    <location>
        <position position="380"/>
    </location>
</feature>
<feature type="sequence variant" id="VAR_024911" description="In MPS4A; dbSNP:rs200763834." evidence="3">
    <original>R</original>
    <variation>S</variation>
    <location>
        <position position="380"/>
    </location>
</feature>
<feature type="sequence variant" id="VAR_024912" description="In MPS4A; dbSNP:rs2142995734." evidence="3 7">
    <original>R</original>
    <variation>T</variation>
    <location>
        <position position="380"/>
    </location>
</feature>
<feature type="sequence variant" id="VAR_007228" description="In MPS4A; severe form; dbSNP:rs118204437." evidence="7 11 16">
    <original>R</original>
    <variation>C</variation>
    <location>
        <position position="386"/>
    </location>
</feature>
<feature type="sequence variant" id="VAR_024913" description="In MPS4A; dbSNP:rs1221167717." evidence="3 7">
    <original>R</original>
    <variation>H</variation>
    <location>
        <position position="386"/>
    </location>
</feature>
<feature type="sequence variant" id="VAR_024914" description="In MPS4A; dbSNP:rs373739301." evidence="3">
    <original>D</original>
    <variation>N</variation>
    <location>
        <position position="388"/>
    </location>
</feature>
<feature type="sequence variant" id="VAR_007229" description="In MPS4A; severe form; dbSNP:rs398123429." evidence="7 16">
    <original>M</original>
    <variation>V</variation>
    <location>
        <position position="391"/>
    </location>
</feature>
<feature type="sequence variant" id="VAR_024915" description="In MPS4A; dbSNP:rs398123430." evidence="3 7">
    <original>A</original>
    <variation>V</variation>
    <location>
        <position position="392"/>
    </location>
</feature>
<feature type="sequence variant" id="VAR_007230" description="In dbSNP:rs2303269." evidence="3 17">
    <original>A</original>
    <variation>S</variation>
    <location>
        <position position="393"/>
    </location>
</feature>
<feature type="sequence variant" id="VAR_007231" description="In MPS4A; dbSNP:rs1227964288." evidence="16">
    <original>L</original>
    <variation>P</variation>
    <location>
        <position position="395"/>
    </location>
</feature>
<feature type="sequence variant" id="VAR_007232" description="In MPS4A; severe form; dbSNP:rs767701478." evidence="18">
    <original>L</original>
    <variation>V</variation>
    <location>
        <position position="395"/>
    </location>
</feature>
<feature type="sequence variant" id="VAR_024916" description="In MPS4A; dbSNP:rs1910635964." evidence="3">
    <original>H</original>
    <variation>D</variation>
    <location>
        <position position="398"/>
    </location>
</feature>
<feature type="sequence variant" id="VAR_024917" description="In MPS4A; dbSNP:rs2142993806." evidence="3">
    <original>H</original>
    <variation>Y</variation>
    <location>
        <position position="401"/>
    </location>
</feature>
<feature type="sequence variant" id="VAR_024918" description="In MPS4A." evidence="3">
    <location>
        <begin position="403"/>
        <end position="404"/>
    </location>
</feature>
<feature type="sequence variant" id="VAR_007233" description="In MPS4A; dbSNP:rs749578474." evidence="7">
    <original>N</original>
    <variation>H</variation>
    <location>
        <position position="407"/>
    </location>
</feature>
<feature type="sequence variant" id="VAR_007234" description="In MPS4A; associated with M-67 in a patient; dbSNP:rs2142993782." evidence="15">
    <original>W</original>
    <variation>S</variation>
    <location>
        <position position="409"/>
    </location>
</feature>
<feature type="sequence variant" id="VAR_071594" description="In MPS4A; loss of enzymatic activity; dbSNP:rs2142992416." evidence="7">
    <original>G</original>
    <variation>V</variation>
    <location>
        <position position="415"/>
    </location>
</feature>
<feature type="sequence variant" id="VAR_071595" description="In MPS4A; reduced enzymatic activity; dbSNP:rs142822371." evidence="7">
    <original>I</original>
    <variation>T</variation>
    <location>
        <position position="416"/>
    </location>
</feature>
<feature type="sequence variant" id="VAR_071596" description="In MPS4A; reduced enzymatic activity; dbSNP:rs752937387." evidence="7">
    <original>P</original>
    <variation>R</variation>
    <location>
        <position position="420"/>
    </location>
</feature>
<feature type="sequence variant" id="VAR_007235" description="In MPS4A; severe form; dbSNP:rs2142992313." evidence="12">
    <original>E</original>
    <variation>V</variation>
    <location>
        <position position="450"/>
    </location>
</feature>
<feature type="sequence variant" id="VAR_024919" description="In MPS4A; dbSNP:rs398123432." evidence="3">
    <original>F</original>
    <variation>I</variation>
    <location>
        <position position="452"/>
    </location>
</feature>
<feature type="sequence variant" id="VAR_007236" description="In dbSNP:rs114703967." evidence="3">
    <original>A</original>
    <variation>V</variation>
    <location>
        <position position="459"/>
    </location>
</feature>
<feature type="sequence variant" id="VAR_024920" description="In MPS4A; dbSNP:rs2142982603." evidence="3">
    <original>S</original>
    <variation>P</variation>
    <location>
        <position position="470"/>
    </location>
</feature>
<feature type="sequence variant" id="VAR_024921" description="In MPS4A; dbSNP:rs1204485789." evidence="3">
    <original>P</original>
    <variation>S</variation>
    <location>
        <position position="484"/>
    </location>
</feature>
<feature type="sequence variant" id="VAR_007237" description="In MPS4A; dbSNP:rs118204440." evidence="9 11">
    <original>N</original>
    <variation>S</variation>
    <location>
        <position position="487"/>
    </location>
</feature>
<feature type="sequence variant" id="VAR_007238" description="In dbSNP:rs78127134." evidence="3 17">
    <original>V</original>
    <variation>M</variation>
    <location>
        <position position="488"/>
    </location>
</feature>
<feature type="sequence variant" id="VAR_071597" description="In MPS4A; reduced enzymatic activity; dbSNP:rs760300454." evidence="7">
    <original>A</original>
    <variation>T</variation>
    <location>
        <position position="492"/>
    </location>
</feature>
<feature type="sequence variant" id="VAR_007239" description="In MPS4A; severe form; dbSNP:rs1401175486." evidence="7">
    <original>M</original>
    <variation>V</variation>
    <location>
        <position position="494"/>
    </location>
</feature>
<feature type="sequence variant" id="VAR_071598" description="In dbSNP:rs886039377." evidence="7">
    <original>N</original>
    <variation>K</variation>
    <location>
        <position position="495"/>
    </location>
</feature>
<feature type="sequence variant" id="VAR_071599" description="In MPS4A; reduced enzymatic activity; dbSNP:rs1303492021." evidence="7">
    <original>G</original>
    <variation>S</variation>
    <location>
        <position position="500"/>
    </location>
</feature>
<feature type="sequence variant" id="VAR_071600" description="In MPS4A; dbSNP:rs398123433." evidence="7">
    <original>C</original>
    <variation>F</variation>
    <location>
        <position position="507"/>
    </location>
</feature>
<feature type="sequence variant" id="VAR_036493" description="In a colorectal cancer sample; somatic mutation." evidence="4">
    <original>P</original>
    <variation>T</variation>
    <location>
        <position position="510"/>
    </location>
</feature>
<feature type="strand" evidence="20">
    <location>
        <begin position="32"/>
        <end position="40"/>
    </location>
</feature>
<feature type="helix" evidence="20">
    <location>
        <begin position="47"/>
        <end position="49"/>
    </location>
</feature>
<feature type="helix" evidence="20">
    <location>
        <begin position="57"/>
        <end position="64"/>
    </location>
</feature>
<feature type="strand" evidence="20">
    <location>
        <begin position="66"/>
        <end position="68"/>
    </location>
</feature>
<feature type="strand" evidence="20">
    <location>
        <begin position="70"/>
        <end position="73"/>
    </location>
</feature>
<feature type="strand" evidence="20">
    <location>
        <begin position="75"/>
        <end position="78"/>
    </location>
</feature>
<feature type="helix" evidence="20">
    <location>
        <begin position="79"/>
        <end position="88"/>
    </location>
</feature>
<feature type="helix" evidence="20">
    <location>
        <begin position="92"/>
        <end position="95"/>
    </location>
</feature>
<feature type="helix" evidence="20">
    <location>
        <begin position="124"/>
        <end position="128"/>
    </location>
</feature>
<feature type="helix" evidence="20">
    <location>
        <begin position="129"/>
        <end position="131"/>
    </location>
</feature>
<feature type="strand" evidence="20">
    <location>
        <begin position="134"/>
        <end position="139"/>
    </location>
</feature>
<feature type="helix" evidence="20">
    <location>
        <begin position="147"/>
        <end position="149"/>
    </location>
</feature>
<feature type="helix" evidence="20">
    <location>
        <begin position="151"/>
        <end position="153"/>
    </location>
</feature>
<feature type="strand" evidence="20">
    <location>
        <begin position="157"/>
        <end position="161"/>
    </location>
</feature>
<feature type="strand" evidence="20">
    <location>
        <begin position="172"/>
        <end position="175"/>
    </location>
</feature>
<feature type="strand" evidence="20">
    <location>
        <begin position="179"/>
        <end position="182"/>
    </location>
</feature>
<feature type="strand" evidence="20">
    <location>
        <begin position="185"/>
        <end position="190"/>
    </location>
</feature>
<feature type="turn" evidence="20">
    <location>
        <begin position="191"/>
        <end position="193"/>
    </location>
</feature>
<feature type="turn" evidence="20">
    <location>
        <begin position="198"/>
        <end position="200"/>
    </location>
</feature>
<feature type="helix" evidence="20">
    <location>
        <begin position="205"/>
        <end position="220"/>
    </location>
</feature>
<feature type="turn" evidence="20">
    <location>
        <begin position="221"/>
        <end position="223"/>
    </location>
</feature>
<feature type="strand" evidence="20">
    <location>
        <begin position="226"/>
        <end position="231"/>
    </location>
</feature>
<feature type="strand" evidence="20">
    <location>
        <begin position="236"/>
        <end position="238"/>
    </location>
</feature>
<feature type="helix" evidence="20">
    <location>
        <begin position="243"/>
        <end position="245"/>
    </location>
</feature>
<feature type="helix" evidence="20">
    <location>
        <begin position="252"/>
        <end position="274"/>
    </location>
</feature>
<feature type="helix" evidence="20">
    <location>
        <begin position="278"/>
        <end position="280"/>
    </location>
</feature>
<feature type="strand" evidence="20">
    <location>
        <begin position="281"/>
        <end position="289"/>
    </location>
</feature>
<feature type="turn" evidence="20">
    <location>
        <begin position="296"/>
        <end position="298"/>
    </location>
</feature>
<feature type="strand" evidence="20">
    <location>
        <begin position="312"/>
        <end position="314"/>
    </location>
</feature>
<feature type="helix" evidence="20">
    <location>
        <begin position="315"/>
        <end position="318"/>
    </location>
</feature>
<feature type="strand" evidence="20">
    <location>
        <begin position="322"/>
        <end position="325"/>
    </location>
</feature>
<feature type="turn" evidence="20">
    <location>
        <begin position="327"/>
        <end position="329"/>
    </location>
</feature>
<feature type="helix" evidence="20">
    <location>
        <begin position="344"/>
        <end position="353"/>
    </location>
</feature>
<feature type="strand" evidence="20">
    <location>
        <begin position="359"/>
        <end position="361"/>
    </location>
</feature>
<feature type="helix" evidence="20">
    <location>
        <begin position="369"/>
        <end position="374"/>
    </location>
</feature>
<feature type="strand" evidence="20">
    <location>
        <begin position="382"/>
        <end position="386"/>
    </location>
</feature>
<feature type="strand" evidence="20">
    <location>
        <begin position="389"/>
        <end position="395"/>
    </location>
</feature>
<feature type="strand" evidence="20">
    <location>
        <begin position="398"/>
        <end position="404"/>
    </location>
</feature>
<feature type="helix" evidence="20">
    <location>
        <begin position="409"/>
        <end position="413"/>
    </location>
</feature>
<feature type="turn" evidence="20">
    <location>
        <begin position="425"/>
        <end position="427"/>
    </location>
</feature>
<feature type="strand" evidence="20">
    <location>
        <begin position="436"/>
        <end position="438"/>
    </location>
</feature>
<feature type="strand" evidence="20">
    <location>
        <begin position="440"/>
        <end position="443"/>
    </location>
</feature>
<feature type="turn" evidence="20">
    <location>
        <begin position="444"/>
        <end position="446"/>
    </location>
</feature>
<feature type="helix" evidence="20">
    <location>
        <begin position="459"/>
        <end position="477"/>
    </location>
</feature>
<feature type="strand" evidence="20">
    <location>
        <begin position="485"/>
        <end position="489"/>
    </location>
</feature>
<feature type="helix" evidence="20">
    <location>
        <begin position="491"/>
        <end position="493"/>
    </location>
</feature>
<feature type="strand" evidence="20">
    <location>
        <begin position="494"/>
        <end position="497"/>
    </location>
</feature>
<feature type="helix" evidence="20">
    <location>
        <begin position="501"/>
        <end position="504"/>
    </location>
</feature>
<gene>
    <name type="primary">GALNS</name>
</gene>
<evidence type="ECO:0000250" key="1">
    <source>
        <dbReference type="UniProtKB" id="P15289"/>
    </source>
</evidence>
<evidence type="ECO:0000269" key="2">
    <source>
    </source>
</evidence>
<evidence type="ECO:0000269" key="3">
    <source>
    </source>
</evidence>
<evidence type="ECO:0000269" key="4">
    <source>
    </source>
</evidence>
<evidence type="ECO:0000269" key="5">
    <source>
    </source>
</evidence>
<evidence type="ECO:0000269" key="6">
    <source>
    </source>
</evidence>
<evidence type="ECO:0000269" key="7">
    <source>
    </source>
</evidence>
<evidence type="ECO:0000269" key="8">
    <source>
    </source>
</evidence>
<evidence type="ECO:0000269" key="9">
    <source>
    </source>
</evidence>
<evidence type="ECO:0000269" key="10">
    <source>
    </source>
</evidence>
<evidence type="ECO:0000269" key="11">
    <source>
    </source>
</evidence>
<evidence type="ECO:0000269" key="12">
    <source>
    </source>
</evidence>
<evidence type="ECO:0000269" key="13">
    <source>
    </source>
</evidence>
<evidence type="ECO:0000269" key="14">
    <source>
    </source>
</evidence>
<evidence type="ECO:0000269" key="15">
    <source>
    </source>
</evidence>
<evidence type="ECO:0000269" key="16">
    <source>
    </source>
</evidence>
<evidence type="ECO:0000269" key="17">
    <source>
    </source>
</evidence>
<evidence type="ECO:0000269" key="18">
    <source>
    </source>
</evidence>
<evidence type="ECO:0000305" key="19"/>
<evidence type="ECO:0007829" key="20">
    <source>
        <dbReference type="PDB" id="4FDI"/>
    </source>
</evidence>
<accession>P34059</accession>
<accession>Q86VK3</accession>